<feature type="chain" id="PRO_0000280157" description="Neuraminidase">
    <location>
        <begin position="1"/>
        <end position="469"/>
    </location>
</feature>
<feature type="topological domain" description="Intravirion" evidence="1">
    <location>
        <begin position="1"/>
        <end position="9"/>
    </location>
</feature>
<feature type="transmembrane region" description="Helical" evidence="1">
    <location>
        <begin position="10"/>
        <end position="30"/>
    </location>
</feature>
<feature type="topological domain" description="Virion surface" evidence="1">
    <location>
        <begin position="31"/>
        <end position="469"/>
    </location>
</feature>
<feature type="region of interest" description="Involved in apical transport and lipid raft association" evidence="1">
    <location>
        <begin position="11"/>
        <end position="33"/>
    </location>
</feature>
<feature type="region of interest" description="Hypervariable stalk region" evidence="1">
    <location>
        <begin position="36"/>
        <end position="88"/>
    </location>
</feature>
<feature type="region of interest" description="Head of neuraminidase" evidence="1">
    <location>
        <begin position="91"/>
        <end position="469"/>
    </location>
</feature>
<feature type="active site" description="Proton donor/acceptor" evidence="1">
    <location>
        <position position="151"/>
    </location>
</feature>
<feature type="active site" description="Nucleophile" evidence="1">
    <location>
        <position position="406"/>
    </location>
</feature>
<feature type="binding site" evidence="1">
    <location>
        <position position="118"/>
    </location>
    <ligand>
        <name>substrate</name>
    </ligand>
</feature>
<feature type="binding site" evidence="1">
    <location>
        <position position="152"/>
    </location>
    <ligand>
        <name>substrate</name>
    </ligand>
</feature>
<feature type="binding site" evidence="1">
    <location>
        <begin position="276"/>
        <end position="277"/>
    </location>
    <ligand>
        <name>substrate</name>
    </ligand>
</feature>
<feature type="binding site" evidence="1">
    <location>
        <position position="292"/>
    </location>
    <ligand>
        <name>substrate</name>
    </ligand>
</feature>
<feature type="binding site" evidence="1">
    <location>
        <position position="293"/>
    </location>
    <ligand>
        <name>Ca(2+)</name>
        <dbReference type="ChEBI" id="CHEBI:29108"/>
    </ligand>
</feature>
<feature type="binding site" evidence="1">
    <location>
        <position position="297"/>
    </location>
    <ligand>
        <name>Ca(2+)</name>
        <dbReference type="ChEBI" id="CHEBI:29108"/>
    </ligand>
</feature>
<feature type="binding site" evidence="1">
    <location>
        <position position="324"/>
    </location>
    <ligand>
        <name>Ca(2+)</name>
        <dbReference type="ChEBI" id="CHEBI:29108"/>
    </ligand>
</feature>
<feature type="binding site" evidence="1">
    <location>
        <position position="371"/>
    </location>
    <ligand>
        <name>substrate</name>
    </ligand>
</feature>
<feature type="glycosylation site" description="N-linked (GlcNAc...) asparagine; by host" evidence="1">
    <location>
        <position position="61"/>
    </location>
</feature>
<feature type="glycosylation site" description="N-linked (GlcNAc...) asparagine; by host" evidence="1">
    <location>
        <position position="70"/>
    </location>
</feature>
<feature type="glycosylation site" description="N-linked (GlcNAc...) asparagine; by host" evidence="1">
    <location>
        <position position="86"/>
    </location>
</feature>
<feature type="glycosylation site" description="N-linked (GlcNAc...) asparagine; by host" evidence="1">
    <location>
        <position position="146"/>
    </location>
</feature>
<feature type="glycosylation site" description="N-linked (GlcNAc...) asparagine; by host" evidence="1">
    <location>
        <position position="200"/>
    </location>
</feature>
<feature type="glycosylation site" description="N-linked (GlcNAc...) asparagine; by host" evidence="1">
    <location>
        <position position="234"/>
    </location>
</feature>
<feature type="glycosylation site" description="N-linked (GlcNAc...) asparagine; by host" evidence="1">
    <location>
        <position position="313"/>
    </location>
</feature>
<feature type="glycosylation site" description="N-linked (GlcNAc...) asparagine; by host" evidence="1">
    <location>
        <position position="402"/>
    </location>
</feature>
<feature type="disulfide bond" evidence="1">
    <location>
        <begin position="92"/>
        <end position="417"/>
    </location>
</feature>
<feature type="disulfide bond" evidence="1">
    <location>
        <begin position="124"/>
        <end position="129"/>
    </location>
</feature>
<feature type="disulfide bond" evidence="1">
    <location>
        <begin position="183"/>
        <end position="230"/>
    </location>
</feature>
<feature type="disulfide bond" evidence="1">
    <location>
        <begin position="232"/>
        <end position="237"/>
    </location>
</feature>
<feature type="disulfide bond" evidence="1">
    <location>
        <begin position="278"/>
        <end position="291"/>
    </location>
</feature>
<feature type="disulfide bond" evidence="1">
    <location>
        <begin position="280"/>
        <end position="289"/>
    </location>
</feature>
<feature type="disulfide bond" evidence="1">
    <location>
        <begin position="318"/>
        <end position="337"/>
    </location>
</feature>
<feature type="disulfide bond" evidence="1">
    <location>
        <begin position="421"/>
        <end position="447"/>
    </location>
</feature>
<feature type="sequence conflict" description="In Ref. 1; AAG01743." ref="1">
    <original>I</original>
    <variation>L</variation>
    <location>
        <position position="10"/>
    </location>
</feature>
<organismHost>
    <name type="scientific">Aves</name>
    <dbReference type="NCBI Taxonomy" id="8782"/>
</organismHost>
<organismHost>
    <name type="scientific">Cetacea</name>
    <name type="common">whales</name>
    <dbReference type="NCBI Taxonomy" id="9721"/>
</organismHost>
<organismHost>
    <name type="scientific">Homo sapiens</name>
    <name type="common">Human</name>
    <dbReference type="NCBI Taxonomy" id="9606"/>
</organismHost>
<organismHost>
    <name type="scientific">Phocidae</name>
    <name type="common">true seals</name>
    <dbReference type="NCBI Taxonomy" id="9709"/>
</organismHost>
<organismHost>
    <name type="scientific">Sus scrofa</name>
    <name type="common">Pig</name>
    <dbReference type="NCBI Taxonomy" id="9823"/>
</organismHost>
<sequence length="469" mass="52099">MNPNQKIITIGSVSLTIATICFLMQIAILVTTVTLHFKQYECDYPANNQAMPCEPIIIERNITEIVYLTNTTIEKEVCPKLVEYRNWSKPQCKITGFAPFSKDNSIRLSAGGDIWVTREPYVSCDPGKCYQFALGQGTTLDNKHSNDTIHDRTPHRTLLMNELGVPFHLGTRQVCIAWSSSSCHDGKAWLHVCVTGYDKNATASFIYDGRLVDSIGSWSQNILRTQESECVCINGTCTVVMTDGSASGRADTKILFIEEGKIVHTSPLSGSAQHVEECSCYPRYPGVRCICRDNWKGSNRPVVDINVKDYSINSSYVCSGLVGDTPRNNDRSSSSYCQNPNNEKGTHGVKGWAFDDGNDVWMGRTISEDSRSGYETFKVIGGWSTPNSKLQINRQVIVDSDNRSGYSGIFSVEGKSCINRCFYVELIRGREQETRVWWTSNSIVVFCGTSGTYGTGSWPDGADINIMPI</sequence>
<evidence type="ECO:0000255" key="1">
    <source>
        <dbReference type="HAMAP-Rule" id="MF_04071"/>
    </source>
</evidence>
<dbReference type="EC" id="3.2.1.18" evidence="1"/>
<dbReference type="EMBL" id="AF251389">
    <property type="protein sequence ID" value="AAG01743.1"/>
    <property type="molecule type" value="Genomic_RNA"/>
</dbReference>
<dbReference type="EMBL" id="CY009302">
    <property type="protein sequence ID" value="ABD61554.1"/>
    <property type="molecule type" value="Genomic_RNA"/>
</dbReference>
<dbReference type="SMR" id="Q9EA42"/>
<dbReference type="CAZy" id="GH34">
    <property type="family name" value="Glycoside Hydrolase Family 34"/>
</dbReference>
<dbReference type="GlyCosmos" id="Q9EA42">
    <property type="glycosylation" value="8 sites, No reported glycans"/>
</dbReference>
<dbReference type="PRO" id="PR:Q9EA42"/>
<dbReference type="Proteomes" id="UP000009193">
    <property type="component" value="Genome"/>
</dbReference>
<dbReference type="GO" id="GO:0020002">
    <property type="term" value="C:host cell plasma membrane"/>
    <property type="evidence" value="ECO:0007669"/>
    <property type="project" value="UniProtKB-SubCell"/>
</dbReference>
<dbReference type="GO" id="GO:0016020">
    <property type="term" value="C:membrane"/>
    <property type="evidence" value="ECO:0007669"/>
    <property type="project" value="UniProtKB-UniRule"/>
</dbReference>
<dbReference type="GO" id="GO:0055036">
    <property type="term" value="C:virion membrane"/>
    <property type="evidence" value="ECO:0007669"/>
    <property type="project" value="UniProtKB-SubCell"/>
</dbReference>
<dbReference type="GO" id="GO:0004308">
    <property type="term" value="F:exo-alpha-sialidase activity"/>
    <property type="evidence" value="ECO:0007669"/>
    <property type="project" value="UniProtKB-UniRule"/>
</dbReference>
<dbReference type="GO" id="GO:0046872">
    <property type="term" value="F:metal ion binding"/>
    <property type="evidence" value="ECO:0007669"/>
    <property type="project" value="UniProtKB-UniRule"/>
</dbReference>
<dbReference type="GO" id="GO:0005975">
    <property type="term" value="P:carbohydrate metabolic process"/>
    <property type="evidence" value="ECO:0007669"/>
    <property type="project" value="InterPro"/>
</dbReference>
<dbReference type="GO" id="GO:0046761">
    <property type="term" value="P:viral budding from plasma membrane"/>
    <property type="evidence" value="ECO:0007669"/>
    <property type="project" value="UniProtKB-UniRule"/>
</dbReference>
<dbReference type="CDD" id="cd15483">
    <property type="entry name" value="Influenza_NA"/>
    <property type="match status" value="1"/>
</dbReference>
<dbReference type="Gene3D" id="2.120.10.10">
    <property type="match status" value="1"/>
</dbReference>
<dbReference type="HAMAP" id="MF_04071">
    <property type="entry name" value="INFV_NRAM"/>
    <property type="match status" value="1"/>
</dbReference>
<dbReference type="InterPro" id="IPR001860">
    <property type="entry name" value="Glyco_hydro_34"/>
</dbReference>
<dbReference type="InterPro" id="IPR033654">
    <property type="entry name" value="Sialidase_Influenza_A/B"/>
</dbReference>
<dbReference type="InterPro" id="IPR036278">
    <property type="entry name" value="Sialidase_sf"/>
</dbReference>
<dbReference type="Pfam" id="PF00064">
    <property type="entry name" value="Neur"/>
    <property type="match status" value="1"/>
</dbReference>
<dbReference type="SUPFAM" id="SSF50939">
    <property type="entry name" value="Sialidases"/>
    <property type="match status" value="1"/>
</dbReference>
<proteinExistence type="inferred from homology"/>
<accession>Q9EA42</accession>
<accession>Q288Z3</accession>
<name>NRAM_I77A4</name>
<gene>
    <name evidence="1" type="primary">NA</name>
</gene>
<organism>
    <name type="scientific">Influenza A virus (strain A/Swine/Colorado/1/1977 H3N2)</name>
    <dbReference type="NCBI Taxonomy" id="385645"/>
    <lineage>
        <taxon>Viruses</taxon>
        <taxon>Riboviria</taxon>
        <taxon>Orthornavirae</taxon>
        <taxon>Negarnaviricota</taxon>
        <taxon>Polyploviricotina</taxon>
        <taxon>Insthoviricetes</taxon>
        <taxon>Articulavirales</taxon>
        <taxon>Orthomyxoviridae</taxon>
        <taxon>Alphainfluenzavirus</taxon>
        <taxon>Alphainfluenzavirus influenzae</taxon>
        <taxon>Influenza A virus</taxon>
    </lineage>
</organism>
<comment type="function">
    <text evidence="1">Catalyzes the removal of terminal sialic acid residues from viral and cellular glycoconjugates. Cleaves off the terminal sialic acids on the glycosylated HA during virus budding to facilitate virus release. Additionally helps virus spread through the circulation by further removing sialic acids from the cell surface. These cleavages prevent self-aggregation and ensure the efficient spread of the progeny virus from cell to cell. Otherwise, infection would be limited to one round of replication. Described as a receptor-destroying enzyme because it cleaves a terminal sialic acid from the cellular receptors. May facilitate viral invasion of the upper airways by cleaving the sialic acid moieties on the mucin of the airway epithelial cells. Likely to plays a role in the budding process through its association with lipid rafts during intracellular transport. May additionally display a raft-association independent effect on budding. Plays a role in the determination of host range restriction on replication and virulence. Sialidase activity in late endosome/lysosome traffic seems to enhance virus replication.</text>
</comment>
<comment type="catalytic activity">
    <reaction evidence="1">
        <text>Hydrolysis of alpha-(2-&gt;3)-, alpha-(2-&gt;6)-, alpha-(2-&gt;8)- glycosidic linkages of terminal sialic acid residues in oligosaccharides, glycoproteins, glycolipids, colominic acid and synthetic substrates.</text>
        <dbReference type="EC" id="3.2.1.18"/>
    </reaction>
</comment>
<comment type="cofactor">
    <cofactor evidence="1">
        <name>Ca(2+)</name>
        <dbReference type="ChEBI" id="CHEBI:29108"/>
    </cofactor>
</comment>
<comment type="activity regulation">
    <text evidence="1">Inhibited by the neuraminidase inhibitors zanamivir (Relenza) and oseltamivir (Tamiflu). These drugs interfere with the release of progeny virus from infected cells and are effective against all influenza strains. Resistance to neuraminidase inhibitors is quite rare.</text>
</comment>
<comment type="subunit">
    <text evidence="1">Homotetramer.</text>
</comment>
<comment type="subcellular location">
    <subcellularLocation>
        <location evidence="1">Virion membrane</location>
    </subcellularLocation>
    <subcellularLocation>
        <location evidence="1">Host apical cell membrane</location>
        <topology evidence="1">Single-pass type II membrane protein</topology>
    </subcellularLocation>
    <text evidence="1">Preferentially accumulates at the apical plasma membrane in infected polarized epithelial cells, which is the virus assembly site. Uses lipid rafts for cell surface transport and apical sorting. In the virion, forms a mushroom-shaped spike on the surface of the membrane.</text>
</comment>
<comment type="domain">
    <text evidence="1">Intact N-terminus is essential for virion morphogenesis. Possesses two apical sorting signals, one in the ectodomain, which is likely to be a glycan, and the other in the transmembrane domain. The transmembrane domain also plays a role in lipid raft association.</text>
</comment>
<comment type="PTM">
    <text evidence="1">N-glycosylated.</text>
</comment>
<comment type="miscellaneous">
    <text>The influenza A genome consist of 8 RNA segments. Genetic variation of hemagglutinin and/or neuraminidase genes results in the emergence of new influenza strains. The mechanism of variation can be the result of point mutations or the result of genetic reassortment between segments of two different strains.</text>
</comment>
<comment type="similarity">
    <text evidence="1">Belongs to the glycosyl hydrolase 34 family.</text>
</comment>
<protein>
    <recommendedName>
        <fullName evidence="1">Neuraminidase</fullName>
        <ecNumber evidence="1">3.2.1.18</ecNumber>
    </recommendedName>
</protein>
<keyword id="KW-0106">Calcium</keyword>
<keyword id="KW-1015">Disulfide bond</keyword>
<keyword id="KW-0325">Glycoprotein</keyword>
<keyword id="KW-0326">Glycosidase</keyword>
<keyword id="KW-1032">Host cell membrane</keyword>
<keyword id="KW-1043">Host membrane</keyword>
<keyword id="KW-0378">Hydrolase</keyword>
<keyword id="KW-0472">Membrane</keyword>
<keyword id="KW-0479">Metal-binding</keyword>
<keyword id="KW-0735">Signal-anchor</keyword>
<keyword id="KW-0812">Transmembrane</keyword>
<keyword id="KW-1133">Transmembrane helix</keyword>
<keyword id="KW-0946">Virion</keyword>
<reference key="1">
    <citation type="journal article" date="2000" name="Virus Res.">
        <title>Genetic characterization of H3N2 influenza viruses isolated from pigs in North America, 1977-1999: evidence for wholly human and reassortant virus genotypes.</title>
        <authorList>
            <person name="Karasin A.I."/>
            <person name="Schutten M.M."/>
            <person name="Cooper L.A."/>
            <person name="Smith C.B."/>
            <person name="Subbarao K."/>
            <person name="Anderson G.A."/>
            <person name="Carman S."/>
            <person name="Olsen C.W."/>
        </authorList>
    </citation>
    <scope>NUCLEOTIDE SEQUENCE [GENOMIC RNA]</scope>
</reference>
<reference key="2">
    <citation type="submission" date="2006-03" db="EMBL/GenBank/DDBJ databases">
        <title>The NIAID influenza genome sequencing project.</title>
        <authorList>
            <person name="Ghedin E."/>
            <person name="Spiro D."/>
            <person name="Miller N."/>
            <person name="Zaborsky J."/>
            <person name="Feldblyum T."/>
            <person name="Subbu V."/>
            <person name="Shumway M."/>
            <person name="Sparenborg J."/>
            <person name="Groveman L."/>
            <person name="Halpin R."/>
            <person name="Sitz J."/>
            <person name="Koo H."/>
            <person name="Salzberg S.L."/>
            <person name="Webster R.G."/>
            <person name="Hoffmann E."/>
            <person name="Krauss S."/>
            <person name="Naeve C."/>
            <person name="Bao Y."/>
            <person name="Bolotov P."/>
            <person name="Dernovoy D."/>
            <person name="Kiryutin B."/>
            <person name="Lipman D.J."/>
            <person name="Tatusova T."/>
        </authorList>
    </citation>
    <scope>NUCLEOTIDE SEQUENCE [GENOMIC RNA]</scope>
</reference>
<reference key="3">
    <citation type="journal article" date="2004" name="Virus Res.">
        <title>Assembly and budding of influenza virus.</title>
        <authorList>
            <person name="Nayak D.P."/>
            <person name="Hui E.K."/>
            <person name="Barman S."/>
        </authorList>
    </citation>
    <scope>REVIEW</scope>
</reference>
<reference key="4">
    <citation type="journal article" date="2005" name="N. Engl. J. Med.">
        <title>Neuraminidase inhibitors for influenza.</title>
        <authorList>
            <person name="Moscona A."/>
        </authorList>
    </citation>
    <scope>REVIEW</scope>
</reference>
<reference key="5">
    <citation type="journal article" date="2005" name="Biol. Pharm. Bull.">
        <title>Sialobiology of influenza: molecular mechanism of host range variation of influenza viruses.</title>
        <authorList>
            <person name="Suzuki Y."/>
        </authorList>
    </citation>
    <scope>REVIEW</scope>
</reference>